<dbReference type="EC" id="2.1.1.74" evidence="1"/>
<dbReference type="EMBL" id="CP000097">
    <property type="protein sequence ID" value="ABB26389.1"/>
    <property type="molecule type" value="Genomic_DNA"/>
</dbReference>
<dbReference type="RefSeq" id="WP_011360211.1">
    <property type="nucleotide sequence ID" value="NC_007513.1"/>
</dbReference>
<dbReference type="SMR" id="Q3AX63"/>
<dbReference type="STRING" id="316279.Syncc9902_1425"/>
<dbReference type="KEGG" id="sye:Syncc9902_1425"/>
<dbReference type="eggNOG" id="COG1206">
    <property type="taxonomic scope" value="Bacteria"/>
</dbReference>
<dbReference type="HOGENOM" id="CLU_033057_1_0_3"/>
<dbReference type="OrthoDB" id="9803114at2"/>
<dbReference type="Proteomes" id="UP000002712">
    <property type="component" value="Chromosome"/>
</dbReference>
<dbReference type="GO" id="GO:0005829">
    <property type="term" value="C:cytosol"/>
    <property type="evidence" value="ECO:0007669"/>
    <property type="project" value="TreeGrafter"/>
</dbReference>
<dbReference type="GO" id="GO:0050660">
    <property type="term" value="F:flavin adenine dinucleotide binding"/>
    <property type="evidence" value="ECO:0007669"/>
    <property type="project" value="UniProtKB-UniRule"/>
</dbReference>
<dbReference type="GO" id="GO:0047151">
    <property type="term" value="F:tRNA (uracil(54)-C5)-methyltransferase activity, 5,10-methylenetetrahydrofolate-dependent"/>
    <property type="evidence" value="ECO:0007669"/>
    <property type="project" value="UniProtKB-UniRule"/>
</dbReference>
<dbReference type="GO" id="GO:0030488">
    <property type="term" value="P:tRNA methylation"/>
    <property type="evidence" value="ECO:0007669"/>
    <property type="project" value="TreeGrafter"/>
</dbReference>
<dbReference type="GO" id="GO:0002098">
    <property type="term" value="P:tRNA wobble uridine modification"/>
    <property type="evidence" value="ECO:0007669"/>
    <property type="project" value="TreeGrafter"/>
</dbReference>
<dbReference type="Gene3D" id="3.50.50.60">
    <property type="entry name" value="FAD/NAD(P)-binding domain"/>
    <property type="match status" value="2"/>
</dbReference>
<dbReference type="HAMAP" id="MF_01037">
    <property type="entry name" value="TrmFO"/>
    <property type="match status" value="1"/>
</dbReference>
<dbReference type="InterPro" id="IPR036188">
    <property type="entry name" value="FAD/NAD-bd_sf"/>
</dbReference>
<dbReference type="InterPro" id="IPR002218">
    <property type="entry name" value="MnmG-rel"/>
</dbReference>
<dbReference type="InterPro" id="IPR040131">
    <property type="entry name" value="MnmG_N"/>
</dbReference>
<dbReference type="InterPro" id="IPR004417">
    <property type="entry name" value="TrmFO"/>
</dbReference>
<dbReference type="NCBIfam" id="TIGR00137">
    <property type="entry name" value="gid_trmFO"/>
    <property type="match status" value="1"/>
</dbReference>
<dbReference type="NCBIfam" id="NF003739">
    <property type="entry name" value="PRK05335.1"/>
    <property type="match status" value="1"/>
</dbReference>
<dbReference type="PANTHER" id="PTHR11806">
    <property type="entry name" value="GLUCOSE INHIBITED DIVISION PROTEIN A"/>
    <property type="match status" value="1"/>
</dbReference>
<dbReference type="PANTHER" id="PTHR11806:SF2">
    <property type="entry name" value="METHYLENETETRAHYDROFOLATE--TRNA-(URACIL-5-)-METHYLTRANSFERASE TRMFO"/>
    <property type="match status" value="1"/>
</dbReference>
<dbReference type="Pfam" id="PF01134">
    <property type="entry name" value="GIDA"/>
    <property type="match status" value="1"/>
</dbReference>
<dbReference type="PRINTS" id="PR00411">
    <property type="entry name" value="PNDRDTASEI"/>
</dbReference>
<dbReference type="SUPFAM" id="SSF51905">
    <property type="entry name" value="FAD/NAD(P)-binding domain"/>
    <property type="match status" value="1"/>
</dbReference>
<comment type="function">
    <text evidence="1">Catalyzes the folate-dependent formation of 5-methyl-uridine at position 54 (M-5-U54) in all tRNAs.</text>
</comment>
<comment type="catalytic activity">
    <reaction evidence="1">
        <text>uridine(54) in tRNA + (6R)-5,10-methylene-5,6,7,8-tetrahydrofolate + NADH + H(+) = 5-methyluridine(54) in tRNA + (6S)-5,6,7,8-tetrahydrofolate + NAD(+)</text>
        <dbReference type="Rhea" id="RHEA:16873"/>
        <dbReference type="Rhea" id="RHEA-COMP:10167"/>
        <dbReference type="Rhea" id="RHEA-COMP:10193"/>
        <dbReference type="ChEBI" id="CHEBI:15378"/>
        <dbReference type="ChEBI" id="CHEBI:15636"/>
        <dbReference type="ChEBI" id="CHEBI:57453"/>
        <dbReference type="ChEBI" id="CHEBI:57540"/>
        <dbReference type="ChEBI" id="CHEBI:57945"/>
        <dbReference type="ChEBI" id="CHEBI:65315"/>
        <dbReference type="ChEBI" id="CHEBI:74447"/>
        <dbReference type="EC" id="2.1.1.74"/>
    </reaction>
</comment>
<comment type="catalytic activity">
    <reaction evidence="1">
        <text>uridine(54) in tRNA + (6R)-5,10-methylene-5,6,7,8-tetrahydrofolate + NADPH + H(+) = 5-methyluridine(54) in tRNA + (6S)-5,6,7,8-tetrahydrofolate + NADP(+)</text>
        <dbReference type="Rhea" id="RHEA:62372"/>
        <dbReference type="Rhea" id="RHEA-COMP:10167"/>
        <dbReference type="Rhea" id="RHEA-COMP:10193"/>
        <dbReference type="ChEBI" id="CHEBI:15378"/>
        <dbReference type="ChEBI" id="CHEBI:15636"/>
        <dbReference type="ChEBI" id="CHEBI:57453"/>
        <dbReference type="ChEBI" id="CHEBI:57783"/>
        <dbReference type="ChEBI" id="CHEBI:58349"/>
        <dbReference type="ChEBI" id="CHEBI:65315"/>
        <dbReference type="ChEBI" id="CHEBI:74447"/>
        <dbReference type="EC" id="2.1.1.74"/>
    </reaction>
</comment>
<comment type="cofactor">
    <cofactor evidence="1">
        <name>FAD</name>
        <dbReference type="ChEBI" id="CHEBI:57692"/>
    </cofactor>
</comment>
<comment type="subcellular location">
    <subcellularLocation>
        <location evidence="1">Cytoplasm</location>
    </subcellularLocation>
</comment>
<comment type="similarity">
    <text evidence="1">Belongs to the MnmG family. TrmFO subfamily.</text>
</comment>
<feature type="chain" id="PRO_0000346407" description="Methylenetetrahydrofolate--tRNA-(uracil-5-)-methyltransferase TrmFO">
    <location>
        <begin position="1"/>
        <end position="460"/>
    </location>
</feature>
<feature type="binding site" evidence="1">
    <location>
        <begin position="15"/>
        <end position="20"/>
    </location>
    <ligand>
        <name>FAD</name>
        <dbReference type="ChEBI" id="CHEBI:57692"/>
    </ligand>
</feature>
<accession>Q3AX63</accession>
<reference key="1">
    <citation type="submission" date="2005-08" db="EMBL/GenBank/DDBJ databases">
        <title>Complete sequence of Synechococcus sp. CC9902.</title>
        <authorList>
            <person name="Copeland A."/>
            <person name="Lucas S."/>
            <person name="Lapidus A."/>
            <person name="Barry K."/>
            <person name="Detter J.C."/>
            <person name="Glavina T."/>
            <person name="Hammon N."/>
            <person name="Israni S."/>
            <person name="Pitluck S."/>
            <person name="Martinez M."/>
            <person name="Schmutz J."/>
            <person name="Larimer F."/>
            <person name="Land M."/>
            <person name="Kyrpides N."/>
            <person name="Ivanova N."/>
            <person name="Richardson P."/>
        </authorList>
    </citation>
    <scope>NUCLEOTIDE SEQUENCE [LARGE SCALE GENOMIC DNA]</scope>
    <source>
        <strain>CC9902</strain>
    </source>
</reference>
<sequence>MPNDRSVKRSVTVLGAGLAGTEAAWQVACAGIPVTLVEMRPVRRSPAHHSSDFAELVCSNSFGALSSDRAAGLLQEELRRLGSLVIRTADDHAVPAGGALAVDRGRYSAALTEILDQHPLVTIERREQMDLPEVDAVTVLATGPLTSESLANDLRGFTGRDDCHFFDAASPIVHGDSIDLNLAFRASRYDKGDADYINCPMNKAEFLAFREALLEAEQAELKDFDQESAKFFEGCLPIEELARRGEDTMRYGPLKPIGLWDPRWGDVNDRDVRRAKRAYAVVQLRQEDKDGRLWNLVGFQTNLKWGEQRRVLQMIPGLAQAEFVRFGVMHRNTFLESPQLLDPTLQFRTRRHLLAAGQITGTEGYAAAVAGGWLAGTNAARLVRGLDPIALPNTTMAGALTHFVSEAPTKKFQPMPPNFGLLPDLPERIRDKRARYGAYRDRSLADLEPIRALIPEPLLA</sequence>
<name>TRMFO_SYNS9</name>
<evidence type="ECO:0000255" key="1">
    <source>
        <dbReference type="HAMAP-Rule" id="MF_01037"/>
    </source>
</evidence>
<organism>
    <name type="scientific">Synechococcus sp. (strain CC9902)</name>
    <dbReference type="NCBI Taxonomy" id="316279"/>
    <lineage>
        <taxon>Bacteria</taxon>
        <taxon>Bacillati</taxon>
        <taxon>Cyanobacteriota</taxon>
        <taxon>Cyanophyceae</taxon>
        <taxon>Synechococcales</taxon>
        <taxon>Synechococcaceae</taxon>
        <taxon>Synechococcus</taxon>
    </lineage>
</organism>
<gene>
    <name evidence="1" type="primary">trmFO</name>
    <name type="ordered locus">Syncc9902_1425</name>
</gene>
<proteinExistence type="inferred from homology"/>
<keyword id="KW-0963">Cytoplasm</keyword>
<keyword id="KW-0274">FAD</keyword>
<keyword id="KW-0285">Flavoprotein</keyword>
<keyword id="KW-0489">Methyltransferase</keyword>
<keyword id="KW-0520">NAD</keyword>
<keyword id="KW-0521">NADP</keyword>
<keyword id="KW-1185">Reference proteome</keyword>
<keyword id="KW-0808">Transferase</keyword>
<keyword id="KW-0819">tRNA processing</keyword>
<protein>
    <recommendedName>
        <fullName evidence="1">Methylenetetrahydrofolate--tRNA-(uracil-5-)-methyltransferase TrmFO</fullName>
        <ecNumber evidence="1">2.1.1.74</ecNumber>
    </recommendedName>
    <alternativeName>
        <fullName evidence="1">Folate-dependent tRNA (uracil-5-)-methyltransferase</fullName>
    </alternativeName>
    <alternativeName>
        <fullName evidence="1">Folate-dependent tRNA(M-5-U54)-methyltransferase</fullName>
    </alternativeName>
</protein>